<gene>
    <name type="ordered locus">Mup18</name>
</gene>
<proteinExistence type="evidence at transcript level"/>
<name>GP18_BPMU</name>
<reference key="1">
    <citation type="submission" date="1987-09" db="EMBL/GenBank/DDBJ databases">
        <authorList>
            <person name="Stoddard S.F."/>
            <person name="Howe M.M."/>
        </authorList>
    </citation>
    <scope>NUCLEOTIDE SEQUENCE [GENOMIC DNA]</scope>
</reference>
<reference key="2">
    <citation type="book" date="1987" name="Phage Mu">
        <title>Sequence of the left end of Mu.</title>
        <editorList>
            <person name="Symonds N."/>
            <person name="Toussaint A."/>
            <person name="van de Putte P."/>
            <person name="Howe M.M."/>
        </editorList>
        <authorList>
            <person name="Priess H."/>
            <person name="Brauer B."/>
            <person name="Schmidt C."/>
            <person name="Kamp D."/>
        </authorList>
    </citation>
    <scope>NUCLEOTIDE SEQUENCE [GENOMIC DNA]</scope>
</reference>
<reference key="3">
    <citation type="journal article" date="2002" name="J. Mol. Biol.">
        <title>Bacteriophage Mu genome sequence: analysis and comparison with Mu-like prophages in Haemophilus, Neisseria and Deinococcus.</title>
        <authorList>
            <person name="Morgan G.J."/>
            <person name="Hatfull G.F."/>
            <person name="Casjens S."/>
            <person name="Hendrix R.W."/>
        </authorList>
    </citation>
    <scope>NUCLEOTIDE SEQUENCE [LARGE SCALE GENOMIC DNA]</scope>
</reference>
<reference key="4">
    <citation type="journal article" date="1989" name="J. Bacteriol.">
        <title>Localization and regulation of bacteriophage Mu promoters.</title>
        <authorList>
            <person name="Stoddard S.F."/>
            <person name="Howe M.M."/>
        </authorList>
    </citation>
    <scope>INDUCTION</scope>
</reference>
<keyword id="KW-1035">Host cytoplasm</keyword>
<keyword id="KW-1185">Reference proteome</keyword>
<protein>
    <recommendedName>
        <fullName>Uncharacterized protein gp18</fullName>
    </recommendedName>
    <alternativeName>
        <fullName>E18</fullName>
    </alternativeName>
    <alternativeName>
        <fullName>E18 protein</fullName>
    </alternativeName>
    <alternativeName>
        <fullName>Gene product 18</fullName>
    </alternativeName>
</protein>
<comment type="subcellular location">
    <subcellularLocation>
        <location evidence="2">Host cytoplasm</location>
    </subcellularLocation>
</comment>
<comment type="induction">
    <text evidence="1">Expressed in the intermediate phase of the viral replicative cycle.</text>
</comment>
<organismHost>
    <name type="scientific">Enterobacteriaceae</name>
    <dbReference type="NCBI Taxonomy" id="543"/>
</organismHost>
<feature type="chain" id="PRO_0000077813" description="Uncharacterized protein gp18">
    <location>
        <begin position="1"/>
        <end position="72"/>
    </location>
</feature>
<sequence>MGKGWNASFHLGRRERLRQEVLHRVAGGPRPAPRDYTGHDGTHGSYYMKGWQSVDMPEILHHCLLYREKHYV</sequence>
<organism>
    <name type="scientific">Escherichia phage Mu</name>
    <name type="common">Bacteriophage Mu</name>
    <dbReference type="NCBI Taxonomy" id="2681603"/>
    <lineage>
        <taxon>Viruses</taxon>
        <taxon>Duplodnaviria</taxon>
        <taxon>Heunggongvirae</taxon>
        <taxon>Uroviricota</taxon>
        <taxon>Caudoviricetes</taxon>
        <taxon>Muvirus</taxon>
        <taxon>Muvirus mu</taxon>
    </lineage>
</organism>
<dbReference type="EMBL" id="Y00419">
    <property type="protein sequence ID" value="CAA68476.1"/>
    <property type="molecule type" value="Genomic_DNA"/>
</dbReference>
<dbReference type="EMBL" id="M64097">
    <property type="protein sequence ID" value="AAA32410.1"/>
    <property type="molecule type" value="Genomic_DNA"/>
</dbReference>
<dbReference type="EMBL" id="AF083977">
    <property type="protein sequence ID" value="AAF01095.1"/>
    <property type="molecule type" value="Genomic_DNA"/>
</dbReference>
<dbReference type="RefSeq" id="NP_050622.1">
    <property type="nucleotide sequence ID" value="NC_000929.1"/>
</dbReference>
<dbReference type="GeneID" id="2636281"/>
<dbReference type="KEGG" id="vg:2636281"/>
<dbReference type="Proteomes" id="UP000002611">
    <property type="component" value="Genome"/>
</dbReference>
<dbReference type="Proteomes" id="UP000401936">
    <property type="component" value="Segment"/>
</dbReference>
<dbReference type="GO" id="GO:0030430">
    <property type="term" value="C:host cell cytoplasm"/>
    <property type="evidence" value="ECO:0007669"/>
    <property type="project" value="UniProtKB-SubCell"/>
</dbReference>
<accession>Q38625</accession>
<evidence type="ECO:0000269" key="1">
    <source>
    </source>
</evidence>
<evidence type="ECO:0000305" key="2"/>